<protein>
    <recommendedName>
        <fullName evidence="1">Putative pyruvate, phosphate dikinase regulatory protein</fullName>
        <shortName evidence="1">PPDK regulatory protein</shortName>
        <ecNumber evidence="1">2.7.11.32</ecNumber>
        <ecNumber evidence="1">2.7.4.27</ecNumber>
    </recommendedName>
</protein>
<reference key="1">
    <citation type="submission" date="2009-01" db="EMBL/GenBank/DDBJ databases">
        <title>Complete sequence of Geobacter sp. FRC-32.</title>
        <authorList>
            <consortium name="US DOE Joint Genome Institute"/>
            <person name="Lucas S."/>
            <person name="Copeland A."/>
            <person name="Lapidus A."/>
            <person name="Glavina del Rio T."/>
            <person name="Dalin E."/>
            <person name="Tice H."/>
            <person name="Bruce D."/>
            <person name="Goodwin L."/>
            <person name="Pitluck S."/>
            <person name="Saunders E."/>
            <person name="Brettin T."/>
            <person name="Detter J.C."/>
            <person name="Han C."/>
            <person name="Larimer F."/>
            <person name="Land M."/>
            <person name="Hauser L."/>
            <person name="Kyrpides N."/>
            <person name="Ovchinnikova G."/>
            <person name="Kostka J."/>
            <person name="Richardson P."/>
        </authorList>
    </citation>
    <scope>NUCLEOTIDE SEQUENCE [LARGE SCALE GENOMIC DNA]</scope>
    <source>
        <strain>DSM 22248 / JCM 15807 / FRC-32</strain>
    </source>
</reference>
<organism>
    <name type="scientific">Geotalea daltonii (strain DSM 22248 / JCM 15807 / FRC-32)</name>
    <name type="common">Geobacter daltonii</name>
    <dbReference type="NCBI Taxonomy" id="316067"/>
    <lineage>
        <taxon>Bacteria</taxon>
        <taxon>Pseudomonadati</taxon>
        <taxon>Thermodesulfobacteriota</taxon>
        <taxon>Desulfuromonadia</taxon>
        <taxon>Geobacterales</taxon>
        <taxon>Geobacteraceae</taxon>
        <taxon>Geotalea</taxon>
    </lineage>
</organism>
<feature type="chain" id="PRO_1000149710" description="Putative pyruvate, phosphate dikinase regulatory protein">
    <location>
        <begin position="1"/>
        <end position="269"/>
    </location>
</feature>
<feature type="binding site" evidence="1">
    <location>
        <begin position="147"/>
        <end position="154"/>
    </location>
    <ligand>
        <name>ADP</name>
        <dbReference type="ChEBI" id="CHEBI:456216"/>
    </ligand>
</feature>
<accession>B9LZ47</accession>
<name>PDRP_GEODF</name>
<sequence length="269" mass="31165">MQRIYLFSDATGETVERVVRAALTQFRNVDVKLHRMSRLRTREDISISLDEAAKQPGVIFYTLVDNELAQYLYNEANLRQLEAIDLITPLLYRLASLLGIQPQKEPGLLYQLNSEYYKRMEAVDFTVKQDDGQEPRNLHKADIVLVGVSRTSKTPLSMYLAHKGYKVANVPLVMGIEPPSELYQVDNSRVVGLMIDAQRLVDIRTARLRNMRQNPRGSYADYQRVEEELDFCRRIYRKHPQWQVIDVTNKSVEESAAEILRRFETGIKD</sequence>
<keyword id="KW-0418">Kinase</keyword>
<keyword id="KW-0547">Nucleotide-binding</keyword>
<keyword id="KW-1185">Reference proteome</keyword>
<keyword id="KW-0723">Serine/threonine-protein kinase</keyword>
<keyword id="KW-0808">Transferase</keyword>
<evidence type="ECO:0000255" key="1">
    <source>
        <dbReference type="HAMAP-Rule" id="MF_00921"/>
    </source>
</evidence>
<dbReference type="EC" id="2.7.11.32" evidence="1"/>
<dbReference type="EC" id="2.7.4.27" evidence="1"/>
<dbReference type="EMBL" id="CP001390">
    <property type="protein sequence ID" value="ACM18779.1"/>
    <property type="molecule type" value="Genomic_DNA"/>
</dbReference>
<dbReference type="RefSeq" id="WP_012645508.1">
    <property type="nucleotide sequence ID" value="NC_011979.1"/>
</dbReference>
<dbReference type="SMR" id="B9LZ47"/>
<dbReference type="STRING" id="316067.Geob_0410"/>
<dbReference type="KEGG" id="geo:Geob_0410"/>
<dbReference type="eggNOG" id="COG1806">
    <property type="taxonomic scope" value="Bacteria"/>
</dbReference>
<dbReference type="HOGENOM" id="CLU_046206_2_1_7"/>
<dbReference type="OrthoDB" id="9782201at2"/>
<dbReference type="Proteomes" id="UP000007721">
    <property type="component" value="Chromosome"/>
</dbReference>
<dbReference type="GO" id="GO:0043531">
    <property type="term" value="F:ADP binding"/>
    <property type="evidence" value="ECO:0007669"/>
    <property type="project" value="UniProtKB-UniRule"/>
</dbReference>
<dbReference type="GO" id="GO:0005524">
    <property type="term" value="F:ATP binding"/>
    <property type="evidence" value="ECO:0007669"/>
    <property type="project" value="InterPro"/>
</dbReference>
<dbReference type="GO" id="GO:0016776">
    <property type="term" value="F:phosphotransferase activity, phosphate group as acceptor"/>
    <property type="evidence" value="ECO:0007669"/>
    <property type="project" value="UniProtKB-UniRule"/>
</dbReference>
<dbReference type="GO" id="GO:0004674">
    <property type="term" value="F:protein serine/threonine kinase activity"/>
    <property type="evidence" value="ECO:0007669"/>
    <property type="project" value="UniProtKB-UniRule"/>
</dbReference>
<dbReference type="HAMAP" id="MF_00921">
    <property type="entry name" value="PDRP"/>
    <property type="match status" value="1"/>
</dbReference>
<dbReference type="InterPro" id="IPR005177">
    <property type="entry name" value="Kinase-pyrophosphorylase"/>
</dbReference>
<dbReference type="InterPro" id="IPR026565">
    <property type="entry name" value="PPDK_reg"/>
</dbReference>
<dbReference type="NCBIfam" id="NF003742">
    <property type="entry name" value="PRK05339.1"/>
    <property type="match status" value="1"/>
</dbReference>
<dbReference type="PANTHER" id="PTHR31756">
    <property type="entry name" value="PYRUVATE, PHOSPHATE DIKINASE REGULATORY PROTEIN 1, CHLOROPLASTIC"/>
    <property type="match status" value="1"/>
</dbReference>
<dbReference type="PANTHER" id="PTHR31756:SF3">
    <property type="entry name" value="PYRUVATE, PHOSPHATE DIKINASE REGULATORY PROTEIN 1, CHLOROPLASTIC"/>
    <property type="match status" value="1"/>
</dbReference>
<dbReference type="Pfam" id="PF03618">
    <property type="entry name" value="Kinase-PPPase"/>
    <property type="match status" value="1"/>
</dbReference>
<comment type="function">
    <text evidence="1">Bifunctional serine/threonine kinase and phosphorylase involved in the regulation of the pyruvate, phosphate dikinase (PPDK) by catalyzing its phosphorylation/dephosphorylation.</text>
</comment>
<comment type="catalytic activity">
    <reaction evidence="1">
        <text>N(tele)-phospho-L-histidyl/L-threonyl-[pyruvate, phosphate dikinase] + ADP = N(tele)-phospho-L-histidyl/O-phospho-L-threonyl-[pyruvate, phosphate dikinase] + AMP + H(+)</text>
        <dbReference type="Rhea" id="RHEA:43692"/>
        <dbReference type="Rhea" id="RHEA-COMP:10650"/>
        <dbReference type="Rhea" id="RHEA-COMP:10651"/>
        <dbReference type="ChEBI" id="CHEBI:15378"/>
        <dbReference type="ChEBI" id="CHEBI:30013"/>
        <dbReference type="ChEBI" id="CHEBI:61977"/>
        <dbReference type="ChEBI" id="CHEBI:83586"/>
        <dbReference type="ChEBI" id="CHEBI:456215"/>
        <dbReference type="ChEBI" id="CHEBI:456216"/>
        <dbReference type="EC" id="2.7.11.32"/>
    </reaction>
</comment>
<comment type="catalytic activity">
    <reaction evidence="1">
        <text>N(tele)-phospho-L-histidyl/O-phospho-L-threonyl-[pyruvate, phosphate dikinase] + phosphate + H(+) = N(tele)-phospho-L-histidyl/L-threonyl-[pyruvate, phosphate dikinase] + diphosphate</text>
        <dbReference type="Rhea" id="RHEA:43696"/>
        <dbReference type="Rhea" id="RHEA-COMP:10650"/>
        <dbReference type="Rhea" id="RHEA-COMP:10651"/>
        <dbReference type="ChEBI" id="CHEBI:15378"/>
        <dbReference type="ChEBI" id="CHEBI:30013"/>
        <dbReference type="ChEBI" id="CHEBI:33019"/>
        <dbReference type="ChEBI" id="CHEBI:43474"/>
        <dbReference type="ChEBI" id="CHEBI:61977"/>
        <dbReference type="ChEBI" id="CHEBI:83586"/>
        <dbReference type="EC" id="2.7.4.27"/>
    </reaction>
</comment>
<comment type="similarity">
    <text evidence="1">Belongs to the pyruvate, phosphate/water dikinase regulatory protein family. PDRP subfamily.</text>
</comment>
<gene>
    <name type="ordered locus">Geob_0410</name>
</gene>
<proteinExistence type="inferred from homology"/>